<gene>
    <name evidence="1" type="primary">rpoA</name>
    <name type="ordered locus">BB_0502</name>
</gene>
<dbReference type="EC" id="2.7.7.6" evidence="1"/>
<dbReference type="EMBL" id="AE000783">
    <property type="protein sequence ID" value="AAC66840.2"/>
    <property type="molecule type" value="Genomic_DNA"/>
</dbReference>
<dbReference type="PIR" id="E70162">
    <property type="entry name" value="E70162"/>
</dbReference>
<dbReference type="RefSeq" id="NP_212636.2">
    <property type="nucleotide sequence ID" value="NC_001318.1"/>
</dbReference>
<dbReference type="RefSeq" id="WP_002659006.1">
    <property type="nucleotide sequence ID" value="NC_001318.1"/>
</dbReference>
<dbReference type="SMR" id="O51455"/>
<dbReference type="STRING" id="224326.BB_0502"/>
<dbReference type="PaxDb" id="224326-BB_0502"/>
<dbReference type="EnsemblBacteria" id="AAC66840">
    <property type="protein sequence ID" value="AAC66840"/>
    <property type="gene ID" value="BB_0502"/>
</dbReference>
<dbReference type="KEGG" id="bbu:BB_0502"/>
<dbReference type="PATRIC" id="fig|224326.49.peg.893"/>
<dbReference type="HOGENOM" id="CLU_053084_0_1_12"/>
<dbReference type="OrthoDB" id="9805706at2"/>
<dbReference type="Proteomes" id="UP000001807">
    <property type="component" value="Chromosome"/>
</dbReference>
<dbReference type="GO" id="GO:0005829">
    <property type="term" value="C:cytosol"/>
    <property type="evidence" value="ECO:0000314"/>
    <property type="project" value="CAFA"/>
</dbReference>
<dbReference type="GO" id="GO:0000428">
    <property type="term" value="C:DNA-directed RNA polymerase complex"/>
    <property type="evidence" value="ECO:0007669"/>
    <property type="project" value="UniProtKB-KW"/>
</dbReference>
<dbReference type="GO" id="GO:0003677">
    <property type="term" value="F:DNA binding"/>
    <property type="evidence" value="ECO:0007669"/>
    <property type="project" value="UniProtKB-UniRule"/>
</dbReference>
<dbReference type="GO" id="GO:0003899">
    <property type="term" value="F:DNA-directed RNA polymerase activity"/>
    <property type="evidence" value="ECO:0007669"/>
    <property type="project" value="UniProtKB-UniRule"/>
</dbReference>
<dbReference type="GO" id="GO:0046983">
    <property type="term" value="F:protein dimerization activity"/>
    <property type="evidence" value="ECO:0007669"/>
    <property type="project" value="InterPro"/>
</dbReference>
<dbReference type="GO" id="GO:0006351">
    <property type="term" value="P:DNA-templated transcription"/>
    <property type="evidence" value="ECO:0007669"/>
    <property type="project" value="UniProtKB-UniRule"/>
</dbReference>
<dbReference type="CDD" id="cd06928">
    <property type="entry name" value="RNAP_alpha_NTD"/>
    <property type="match status" value="1"/>
</dbReference>
<dbReference type="Gene3D" id="1.10.150.20">
    <property type="entry name" value="5' to 3' exonuclease, C-terminal subdomain"/>
    <property type="match status" value="1"/>
</dbReference>
<dbReference type="Gene3D" id="2.170.120.12">
    <property type="entry name" value="DNA-directed RNA polymerase, insert domain"/>
    <property type="match status" value="1"/>
</dbReference>
<dbReference type="Gene3D" id="3.30.1360.10">
    <property type="entry name" value="RNA polymerase, RBP11-like subunit"/>
    <property type="match status" value="1"/>
</dbReference>
<dbReference type="HAMAP" id="MF_00059">
    <property type="entry name" value="RNApol_bact_RpoA"/>
    <property type="match status" value="1"/>
</dbReference>
<dbReference type="InterPro" id="IPR011262">
    <property type="entry name" value="DNA-dir_RNA_pol_insert"/>
</dbReference>
<dbReference type="InterPro" id="IPR011263">
    <property type="entry name" value="DNA-dir_RNA_pol_RpoA/D/Rpb3"/>
</dbReference>
<dbReference type="InterPro" id="IPR011773">
    <property type="entry name" value="DNA-dir_RpoA"/>
</dbReference>
<dbReference type="InterPro" id="IPR036603">
    <property type="entry name" value="RBP11-like"/>
</dbReference>
<dbReference type="InterPro" id="IPR011260">
    <property type="entry name" value="RNAP_asu_C"/>
</dbReference>
<dbReference type="InterPro" id="IPR036643">
    <property type="entry name" value="RNApol_insert_sf"/>
</dbReference>
<dbReference type="NCBIfam" id="NF003513">
    <property type="entry name" value="PRK05182.1-2"/>
    <property type="match status" value="1"/>
</dbReference>
<dbReference type="NCBIfam" id="NF003519">
    <property type="entry name" value="PRK05182.2-5"/>
    <property type="match status" value="1"/>
</dbReference>
<dbReference type="NCBIfam" id="TIGR02027">
    <property type="entry name" value="rpoA"/>
    <property type="match status" value="1"/>
</dbReference>
<dbReference type="Pfam" id="PF01000">
    <property type="entry name" value="RNA_pol_A_bac"/>
    <property type="match status" value="1"/>
</dbReference>
<dbReference type="Pfam" id="PF03118">
    <property type="entry name" value="RNA_pol_A_CTD"/>
    <property type="match status" value="1"/>
</dbReference>
<dbReference type="Pfam" id="PF01193">
    <property type="entry name" value="RNA_pol_L"/>
    <property type="match status" value="1"/>
</dbReference>
<dbReference type="SMART" id="SM00662">
    <property type="entry name" value="RPOLD"/>
    <property type="match status" value="1"/>
</dbReference>
<dbReference type="SUPFAM" id="SSF47789">
    <property type="entry name" value="C-terminal domain of RNA polymerase alpha subunit"/>
    <property type="match status" value="1"/>
</dbReference>
<dbReference type="SUPFAM" id="SSF56553">
    <property type="entry name" value="Insert subdomain of RNA polymerase alpha subunit"/>
    <property type="match status" value="1"/>
</dbReference>
<dbReference type="SUPFAM" id="SSF55257">
    <property type="entry name" value="RBP11-like subunits of RNA polymerase"/>
    <property type="match status" value="1"/>
</dbReference>
<protein>
    <recommendedName>
        <fullName evidence="1">DNA-directed RNA polymerase subunit alpha</fullName>
        <shortName evidence="1">RNAP subunit alpha</shortName>
        <ecNumber evidence="1">2.7.7.6</ecNumber>
    </recommendedName>
    <alternativeName>
        <fullName evidence="1">RNA polymerase subunit alpha</fullName>
    </alternativeName>
    <alternativeName>
        <fullName evidence="1">Transcriptase subunit alpha</fullName>
    </alternativeName>
</protein>
<proteinExistence type="inferred from homology"/>
<accession>O51455</accession>
<comment type="function">
    <text evidence="1">DNA-dependent RNA polymerase catalyzes the transcription of DNA into RNA using the four ribonucleoside triphosphates as substrates.</text>
</comment>
<comment type="catalytic activity">
    <reaction evidence="1">
        <text>RNA(n) + a ribonucleoside 5'-triphosphate = RNA(n+1) + diphosphate</text>
        <dbReference type="Rhea" id="RHEA:21248"/>
        <dbReference type="Rhea" id="RHEA-COMP:14527"/>
        <dbReference type="Rhea" id="RHEA-COMP:17342"/>
        <dbReference type="ChEBI" id="CHEBI:33019"/>
        <dbReference type="ChEBI" id="CHEBI:61557"/>
        <dbReference type="ChEBI" id="CHEBI:140395"/>
        <dbReference type="EC" id="2.7.7.6"/>
    </reaction>
</comment>
<comment type="subunit">
    <text evidence="1">Homodimer. The RNAP catalytic core consists of 2 alpha, 1 beta, 1 beta' and 1 omega subunit. When a sigma factor is associated with the core the holoenzyme is formed, which can initiate transcription.</text>
</comment>
<comment type="domain">
    <text evidence="1">The N-terminal domain is essential for RNAP assembly and basal transcription, whereas the C-terminal domain is involved in interaction with transcriptional regulators and with upstream promoter elements.</text>
</comment>
<comment type="similarity">
    <text evidence="1">Belongs to the RNA polymerase alpha chain family.</text>
</comment>
<keyword id="KW-0240">DNA-directed RNA polymerase</keyword>
<keyword id="KW-0548">Nucleotidyltransferase</keyword>
<keyword id="KW-1185">Reference proteome</keyword>
<keyword id="KW-0804">Transcription</keyword>
<keyword id="KW-0808">Transferase</keyword>
<name>RPOA_BORBU</name>
<feature type="chain" id="PRO_0000175271" description="DNA-directed RNA polymerase subunit alpha">
    <location>
        <begin position="1"/>
        <end position="344"/>
    </location>
</feature>
<feature type="region of interest" description="Alpha N-terminal domain (alpha-NTD)" evidence="1">
    <location>
        <begin position="1"/>
        <end position="246"/>
    </location>
</feature>
<feature type="region of interest" description="Alpha C-terminal domain (alpha-CTD)" evidence="1">
    <location>
        <begin position="259"/>
        <end position="344"/>
    </location>
</feature>
<organism>
    <name type="scientific">Borreliella burgdorferi (strain ATCC 35210 / DSM 4680 / CIP 102532 / B31)</name>
    <name type="common">Borrelia burgdorferi</name>
    <dbReference type="NCBI Taxonomy" id="224326"/>
    <lineage>
        <taxon>Bacteria</taxon>
        <taxon>Pseudomonadati</taxon>
        <taxon>Spirochaetota</taxon>
        <taxon>Spirochaetia</taxon>
        <taxon>Spirochaetales</taxon>
        <taxon>Borreliaceae</taxon>
        <taxon>Borreliella</taxon>
    </lineage>
</organism>
<reference key="1">
    <citation type="journal article" date="1997" name="Nature">
        <title>Genomic sequence of a Lyme disease spirochaete, Borrelia burgdorferi.</title>
        <authorList>
            <person name="Fraser C.M."/>
            <person name="Casjens S."/>
            <person name="Huang W.M."/>
            <person name="Sutton G.G."/>
            <person name="Clayton R.A."/>
            <person name="Lathigra R."/>
            <person name="White O."/>
            <person name="Ketchum K.A."/>
            <person name="Dodson R.J."/>
            <person name="Hickey E.K."/>
            <person name="Gwinn M.L."/>
            <person name="Dougherty B.A."/>
            <person name="Tomb J.-F."/>
            <person name="Fleischmann R.D."/>
            <person name="Richardson D.L."/>
            <person name="Peterson J.D."/>
            <person name="Kerlavage A.R."/>
            <person name="Quackenbush J."/>
            <person name="Salzberg S.L."/>
            <person name="Hanson M."/>
            <person name="van Vugt R."/>
            <person name="Palmer N."/>
            <person name="Adams M.D."/>
            <person name="Gocayne J.D."/>
            <person name="Weidman J.F."/>
            <person name="Utterback T.R."/>
            <person name="Watthey L."/>
            <person name="McDonald L.A."/>
            <person name="Artiach P."/>
            <person name="Bowman C."/>
            <person name="Garland S.A."/>
            <person name="Fujii C."/>
            <person name="Cotton M.D."/>
            <person name="Horst K."/>
            <person name="Roberts K.M."/>
            <person name="Hatch B."/>
            <person name="Smith H.O."/>
            <person name="Venter J.C."/>
        </authorList>
    </citation>
    <scope>NUCLEOTIDE SEQUENCE [LARGE SCALE GENOMIC DNA]</scope>
    <source>
        <strain>ATCC 35210 / DSM 4680 / CIP 102532 / B31</strain>
    </source>
</reference>
<sequence length="344" mass="38554">MLVEKFLKDFTIPEKIEFLKSQGDGSYGKFTIYPFERGFGITIGNTLRRVLLSSIEGYAITAMRVQSNNKDSSSKVVSSEFDLIPGVSEDTLEIIANIKNIHLKLGEGEQRKTISFSVSGKDTNVLKASHFERDGVEVFNKDLVIATLSHDVNLDLEFQINYGRGYVSSEQNSKYLEEVNVIALDSIFSPIEKVSYSVEDTRVGQRSDYDKLVMEIWTTGVISAKDAIKKAASIVREFLFPLVDFEDNVNTSFEKSKSESSNLLDMSIEKLNLSVRSLNCLAKENVRTLGELISKNAEELSKARNFGKKSLEEIIEKLGSYRLYLGMSKEDALSVLSKNVKISE</sequence>
<evidence type="ECO:0000255" key="1">
    <source>
        <dbReference type="HAMAP-Rule" id="MF_00059"/>
    </source>
</evidence>